<dbReference type="EMBL" id="CR378672">
    <property type="protein sequence ID" value="CAG21346.1"/>
    <property type="status" value="ALT_INIT"/>
    <property type="molecule type" value="Genomic_DNA"/>
</dbReference>
<dbReference type="RefSeq" id="WP_041394500.1">
    <property type="nucleotide sequence ID" value="NC_006370.1"/>
</dbReference>
<dbReference type="SMR" id="Q6LMY0"/>
<dbReference type="STRING" id="298386.PBPRA3018"/>
<dbReference type="KEGG" id="ppr:PBPRA3018"/>
<dbReference type="eggNOG" id="COG0542">
    <property type="taxonomic scope" value="Bacteria"/>
</dbReference>
<dbReference type="HOGENOM" id="CLU_005070_4_0_6"/>
<dbReference type="Proteomes" id="UP000000593">
    <property type="component" value="Chromosome 1"/>
</dbReference>
<dbReference type="GO" id="GO:0005737">
    <property type="term" value="C:cytoplasm"/>
    <property type="evidence" value="ECO:0007669"/>
    <property type="project" value="UniProtKB-SubCell"/>
</dbReference>
<dbReference type="GO" id="GO:0005524">
    <property type="term" value="F:ATP binding"/>
    <property type="evidence" value="ECO:0007669"/>
    <property type="project" value="UniProtKB-KW"/>
</dbReference>
<dbReference type="GO" id="GO:0016887">
    <property type="term" value="F:ATP hydrolysis activity"/>
    <property type="evidence" value="ECO:0007669"/>
    <property type="project" value="InterPro"/>
</dbReference>
<dbReference type="GO" id="GO:0034605">
    <property type="term" value="P:cellular response to heat"/>
    <property type="evidence" value="ECO:0007669"/>
    <property type="project" value="TreeGrafter"/>
</dbReference>
<dbReference type="GO" id="GO:0042026">
    <property type="term" value="P:protein refolding"/>
    <property type="evidence" value="ECO:0007669"/>
    <property type="project" value="InterPro"/>
</dbReference>
<dbReference type="CDD" id="cd00009">
    <property type="entry name" value="AAA"/>
    <property type="match status" value="1"/>
</dbReference>
<dbReference type="CDD" id="cd19499">
    <property type="entry name" value="RecA-like_ClpB_Hsp104-like"/>
    <property type="match status" value="1"/>
</dbReference>
<dbReference type="FunFam" id="1.10.1780.10:FF:000003">
    <property type="entry name" value="ATP-dependent chaperone ClpB"/>
    <property type="match status" value="1"/>
</dbReference>
<dbReference type="FunFam" id="1.10.8.60:FF:000017">
    <property type="entry name" value="ATP-dependent chaperone ClpB"/>
    <property type="match status" value="1"/>
</dbReference>
<dbReference type="FunFam" id="3.40.50.300:FF:000120">
    <property type="entry name" value="ATP-dependent chaperone ClpB"/>
    <property type="match status" value="1"/>
</dbReference>
<dbReference type="FunFam" id="3.40.50.300:FF:000025">
    <property type="entry name" value="ATP-dependent Clp protease subunit"/>
    <property type="match status" value="1"/>
</dbReference>
<dbReference type="FunFam" id="3.40.50.300:FF:000010">
    <property type="entry name" value="Chaperone clpB 1, putative"/>
    <property type="match status" value="1"/>
</dbReference>
<dbReference type="Gene3D" id="1.10.8.60">
    <property type="match status" value="1"/>
</dbReference>
<dbReference type="Gene3D" id="1.10.1780.10">
    <property type="entry name" value="Clp, N-terminal domain"/>
    <property type="match status" value="1"/>
</dbReference>
<dbReference type="Gene3D" id="3.40.50.300">
    <property type="entry name" value="P-loop containing nucleotide triphosphate hydrolases"/>
    <property type="match status" value="3"/>
</dbReference>
<dbReference type="InterPro" id="IPR003593">
    <property type="entry name" value="AAA+_ATPase"/>
</dbReference>
<dbReference type="InterPro" id="IPR003959">
    <property type="entry name" value="ATPase_AAA_core"/>
</dbReference>
<dbReference type="InterPro" id="IPR017730">
    <property type="entry name" value="Chaperonin_ClpB"/>
</dbReference>
<dbReference type="InterPro" id="IPR019489">
    <property type="entry name" value="Clp_ATPase_C"/>
</dbReference>
<dbReference type="InterPro" id="IPR036628">
    <property type="entry name" value="Clp_N_dom_sf"/>
</dbReference>
<dbReference type="InterPro" id="IPR004176">
    <property type="entry name" value="Clp_R_dom"/>
</dbReference>
<dbReference type="InterPro" id="IPR001270">
    <property type="entry name" value="ClpA/B"/>
</dbReference>
<dbReference type="InterPro" id="IPR018368">
    <property type="entry name" value="ClpA/B_CS1"/>
</dbReference>
<dbReference type="InterPro" id="IPR028299">
    <property type="entry name" value="ClpA/B_CS2"/>
</dbReference>
<dbReference type="InterPro" id="IPR041546">
    <property type="entry name" value="ClpA/ClpB_AAA_lid"/>
</dbReference>
<dbReference type="InterPro" id="IPR050130">
    <property type="entry name" value="ClpA_ClpB"/>
</dbReference>
<dbReference type="InterPro" id="IPR027417">
    <property type="entry name" value="P-loop_NTPase"/>
</dbReference>
<dbReference type="NCBIfam" id="TIGR03346">
    <property type="entry name" value="chaperone_ClpB"/>
    <property type="match status" value="1"/>
</dbReference>
<dbReference type="NCBIfam" id="NF008118">
    <property type="entry name" value="PRK10865.1"/>
    <property type="match status" value="1"/>
</dbReference>
<dbReference type="PANTHER" id="PTHR11638">
    <property type="entry name" value="ATP-DEPENDENT CLP PROTEASE"/>
    <property type="match status" value="1"/>
</dbReference>
<dbReference type="PANTHER" id="PTHR11638:SF18">
    <property type="entry name" value="HEAT SHOCK PROTEIN 104"/>
    <property type="match status" value="1"/>
</dbReference>
<dbReference type="Pfam" id="PF00004">
    <property type="entry name" value="AAA"/>
    <property type="match status" value="1"/>
</dbReference>
<dbReference type="Pfam" id="PF07724">
    <property type="entry name" value="AAA_2"/>
    <property type="match status" value="1"/>
</dbReference>
<dbReference type="Pfam" id="PF17871">
    <property type="entry name" value="AAA_lid_9"/>
    <property type="match status" value="1"/>
</dbReference>
<dbReference type="Pfam" id="PF02861">
    <property type="entry name" value="Clp_N"/>
    <property type="match status" value="2"/>
</dbReference>
<dbReference type="Pfam" id="PF10431">
    <property type="entry name" value="ClpB_D2-small"/>
    <property type="match status" value="1"/>
</dbReference>
<dbReference type="PRINTS" id="PR00300">
    <property type="entry name" value="CLPPROTEASEA"/>
</dbReference>
<dbReference type="SMART" id="SM00382">
    <property type="entry name" value="AAA"/>
    <property type="match status" value="2"/>
</dbReference>
<dbReference type="SMART" id="SM01086">
    <property type="entry name" value="ClpB_D2-small"/>
    <property type="match status" value="1"/>
</dbReference>
<dbReference type="SUPFAM" id="SSF81923">
    <property type="entry name" value="Double Clp-N motif"/>
    <property type="match status" value="1"/>
</dbReference>
<dbReference type="SUPFAM" id="SSF52540">
    <property type="entry name" value="P-loop containing nucleoside triphosphate hydrolases"/>
    <property type="match status" value="2"/>
</dbReference>
<dbReference type="PROSITE" id="PS51903">
    <property type="entry name" value="CLP_R"/>
    <property type="match status" value="1"/>
</dbReference>
<dbReference type="PROSITE" id="PS00870">
    <property type="entry name" value="CLPAB_1"/>
    <property type="match status" value="1"/>
</dbReference>
<dbReference type="PROSITE" id="PS00871">
    <property type="entry name" value="CLPAB_2"/>
    <property type="match status" value="1"/>
</dbReference>
<accession>Q6LMY0</accession>
<name>CLPB_PHOPR</name>
<gene>
    <name type="primary">clpB</name>
    <name type="ordered locus">PBPRA3018</name>
</gene>
<sequence length="857" mass="96239">MRLDRFTSKFQMAIFDGQSLALGRDHQYIEPAHLMVALLNQDGSTIRPLLTMLNVDISQLRSRLGELLDHLPKVTGIGGEVQLSNDMGLLLNMCDKLAQKRKDKFISSELFILAAVDDKGSLGKLLKELGLTAAKIEQAINQVRGGQKVDDQNAEENRQALEKFTIDLTERAEQGKLDPVIGRDDEIRRTIQVLQRRTKNNPVIIGQPGVGKTAIVEGLAQRIVNGEVPEGLRHKRVLSLDMGSLIAGAKYRGEFEERLKSVLNELSQEEGSVILFIDELHTMVGAGKGEGSMDAGNMLKPALARGELHCVGATTLDEYRQYIEKDAALERRFQKVLVDEPTVEDTIAILRGLKERYELHHHVEITDPAIVAAARLSHRYVSDRQLPDKAIDLIDEAASSIRMQIDSKPESLDRLERRIIQLKIEQQALSKESDAASQKRLNDICEELDVKEREYAELEEVWNAEKAALSGTQHIKSELEQARMNMEVARRAGDLNRMSELQYGKIPELEKQLDLAAQAEMQEMSLLKNKVTDAEIAEVLSKQTGIPVAKMLEGERDKLLRMEDELHQRVIGQNEAVEAVANAIRRSRAGLSDPNRPIGSFLFLGPTGVGKTELCKTLANFMFDSEDNMVRIDMSEFMEKHSVARLVGAPPGYVGYEEGGYLTEAVRRRPYSVILLDEVEKAHPDVFNILLQVLDDGRLTDGQGRTVDFRNTVIIMTSNLGSDRIQENFGNLNYEGIKNMVLEVVSQYFRPEFINRVDETVVFHPLGQENIKHIASIQIERLVNRLKEKDYELTVQESALDFVAKAGFDPVYGARPLKRAIQQYIENPLAQEILSGKLETGKPIDLLIEDEHLVTKQ</sequence>
<organism>
    <name type="scientific">Photobacterium profundum (strain SS9)</name>
    <dbReference type="NCBI Taxonomy" id="298386"/>
    <lineage>
        <taxon>Bacteria</taxon>
        <taxon>Pseudomonadati</taxon>
        <taxon>Pseudomonadota</taxon>
        <taxon>Gammaproteobacteria</taxon>
        <taxon>Vibrionales</taxon>
        <taxon>Vibrionaceae</taxon>
        <taxon>Photobacterium</taxon>
    </lineage>
</organism>
<proteinExistence type="inferred from homology"/>
<keyword id="KW-0067">ATP-binding</keyword>
<keyword id="KW-0143">Chaperone</keyword>
<keyword id="KW-0175">Coiled coil</keyword>
<keyword id="KW-0963">Cytoplasm</keyword>
<keyword id="KW-0547">Nucleotide-binding</keyword>
<keyword id="KW-1185">Reference proteome</keyword>
<keyword id="KW-0677">Repeat</keyword>
<keyword id="KW-0346">Stress response</keyword>
<comment type="function">
    <text evidence="1">Part of a stress-induced multi-chaperone system, it is involved in the recovery of the cell from heat-induced damage, in cooperation with DnaK, DnaJ and GrpE. Acts before DnaK, in the processing of protein aggregates. Protein binding stimulates the ATPase activity; ATP hydrolysis unfolds the denatured protein aggregates, which probably helps expose new hydrophobic binding sites on the surface of ClpB-bound aggregates, contributing to the solubilization and refolding of denatured protein aggregates by DnaK (By similarity).</text>
</comment>
<comment type="subunit">
    <text evidence="1">Homohexamer. The oligomerization is ATP-dependent (By similarity).</text>
</comment>
<comment type="subcellular location">
    <subcellularLocation>
        <location evidence="3">Cytoplasm</location>
    </subcellularLocation>
</comment>
<comment type="domain">
    <text evidence="1">The Clp repeat (R) domain probably functions as a substrate-discriminating domain, recruiting aggregated proteins to the ClpB hexamer and/or stabilizing bound proteins. The NBD2 domain is responsible for oligomerization, whereas the NBD1 domain stabilizes the hexamer probably in an ATP-dependent manner. The movement of the coiled-coil domain is essential for ClpB ability to rescue proteins from an aggregated state, probably by pulling apart large aggregated proteins, which are bound between the coiled-coils motifs of adjacent ClpB subunits in the functional hexamer (By similarity).</text>
</comment>
<comment type="similarity">
    <text evidence="3">Belongs to the ClpA/ClpB family.</text>
</comment>
<comment type="sequence caution" evidence="3">
    <conflict type="erroneous initiation">
        <sequence resource="EMBL-CDS" id="CAG21346"/>
    </conflict>
</comment>
<evidence type="ECO:0000250" key="1"/>
<evidence type="ECO:0000255" key="2">
    <source>
        <dbReference type="PROSITE-ProRule" id="PRU01251"/>
    </source>
</evidence>
<evidence type="ECO:0000305" key="3"/>
<reference key="1">
    <citation type="journal article" date="2005" name="Science">
        <title>Life at depth: Photobacterium profundum genome sequence and expression analysis.</title>
        <authorList>
            <person name="Vezzi A."/>
            <person name="Campanaro S."/>
            <person name="D'Angelo M."/>
            <person name="Simonato F."/>
            <person name="Vitulo N."/>
            <person name="Lauro F.M."/>
            <person name="Cestaro A."/>
            <person name="Malacrida G."/>
            <person name="Simionati B."/>
            <person name="Cannata N."/>
            <person name="Romualdi C."/>
            <person name="Bartlett D.H."/>
            <person name="Valle G."/>
        </authorList>
    </citation>
    <scope>NUCLEOTIDE SEQUENCE [LARGE SCALE GENOMIC DNA]</scope>
    <source>
        <strain>ATCC BAA-1253 / SS9</strain>
    </source>
</reference>
<feature type="chain" id="PRO_0000191154" description="Chaperone protein ClpB">
    <location>
        <begin position="1"/>
        <end position="857"/>
    </location>
</feature>
<feature type="domain" description="Clp R" evidence="2">
    <location>
        <begin position="3"/>
        <end position="146"/>
    </location>
</feature>
<feature type="region of interest" description="Repeat 1" evidence="2">
    <location>
        <begin position="6"/>
        <end position="71"/>
    </location>
</feature>
<feature type="region of interest" description="Repeat 2" evidence="2">
    <location>
        <begin position="83"/>
        <end position="146"/>
    </location>
</feature>
<feature type="region of interest" description="NBD1" evidence="1">
    <location>
        <begin position="159"/>
        <end position="340"/>
    </location>
</feature>
<feature type="region of interest" description="Linker" evidence="1">
    <location>
        <begin position="341"/>
        <end position="545"/>
    </location>
</feature>
<feature type="region of interest" description="NBD2" evidence="1">
    <location>
        <begin position="555"/>
        <end position="765"/>
    </location>
</feature>
<feature type="region of interest" description="C-terminal" evidence="1">
    <location>
        <begin position="766"/>
        <end position="857"/>
    </location>
</feature>
<feature type="coiled-coil region" evidence="1">
    <location>
        <begin position="391"/>
        <end position="525"/>
    </location>
</feature>
<feature type="binding site" evidence="1">
    <location>
        <begin position="206"/>
        <end position="213"/>
    </location>
    <ligand>
        <name>ATP</name>
        <dbReference type="ChEBI" id="CHEBI:30616"/>
        <label>1</label>
    </ligand>
</feature>
<feature type="binding site" evidence="1">
    <location>
        <begin position="605"/>
        <end position="612"/>
    </location>
    <ligand>
        <name>ATP</name>
        <dbReference type="ChEBI" id="CHEBI:30616"/>
        <label>2</label>
    </ligand>
</feature>
<protein>
    <recommendedName>
        <fullName>Chaperone protein ClpB</fullName>
    </recommendedName>
</protein>